<evidence type="ECO:0000255" key="1">
    <source>
        <dbReference type="HAMAP-Rule" id="MF_00108"/>
    </source>
</evidence>
<accession>A9N2D3</accession>
<name>ISPD_SALPB</name>
<keyword id="KW-0414">Isoprene biosynthesis</keyword>
<keyword id="KW-0548">Nucleotidyltransferase</keyword>
<keyword id="KW-0808">Transferase</keyword>
<dbReference type="EC" id="2.7.7.60" evidence="1"/>
<dbReference type="EMBL" id="CP000886">
    <property type="protein sequence ID" value="ABX68984.1"/>
    <property type="molecule type" value="Genomic_DNA"/>
</dbReference>
<dbReference type="RefSeq" id="WP_000741647.1">
    <property type="nucleotide sequence ID" value="NC_010102.1"/>
</dbReference>
<dbReference type="SMR" id="A9N2D3"/>
<dbReference type="KEGG" id="spq:SPAB_03644"/>
<dbReference type="PATRIC" id="fig|1016998.12.peg.3431"/>
<dbReference type="HOGENOM" id="CLU_061281_3_1_6"/>
<dbReference type="BioCyc" id="SENT1016998:SPAB_RS14850-MONOMER"/>
<dbReference type="UniPathway" id="UPA00056">
    <property type="reaction ID" value="UER00093"/>
</dbReference>
<dbReference type="Proteomes" id="UP000008556">
    <property type="component" value="Chromosome"/>
</dbReference>
<dbReference type="GO" id="GO:0050518">
    <property type="term" value="F:2-C-methyl-D-erythritol 4-phosphate cytidylyltransferase activity"/>
    <property type="evidence" value="ECO:0007669"/>
    <property type="project" value="UniProtKB-UniRule"/>
</dbReference>
<dbReference type="GO" id="GO:0019288">
    <property type="term" value="P:isopentenyl diphosphate biosynthetic process, methylerythritol 4-phosphate pathway"/>
    <property type="evidence" value="ECO:0007669"/>
    <property type="project" value="UniProtKB-UniRule"/>
</dbReference>
<dbReference type="CDD" id="cd02516">
    <property type="entry name" value="CDP-ME_synthetase"/>
    <property type="match status" value="1"/>
</dbReference>
<dbReference type="FunFam" id="3.90.550.10:FF:000003">
    <property type="entry name" value="2-C-methyl-D-erythritol 4-phosphate cytidylyltransferase"/>
    <property type="match status" value="1"/>
</dbReference>
<dbReference type="Gene3D" id="3.90.550.10">
    <property type="entry name" value="Spore Coat Polysaccharide Biosynthesis Protein SpsA, Chain A"/>
    <property type="match status" value="1"/>
</dbReference>
<dbReference type="HAMAP" id="MF_00108">
    <property type="entry name" value="IspD"/>
    <property type="match status" value="1"/>
</dbReference>
<dbReference type="InterPro" id="IPR001228">
    <property type="entry name" value="IspD"/>
</dbReference>
<dbReference type="InterPro" id="IPR034683">
    <property type="entry name" value="IspD/TarI"/>
</dbReference>
<dbReference type="InterPro" id="IPR050088">
    <property type="entry name" value="IspD/TarI_cytidylyltransf_bact"/>
</dbReference>
<dbReference type="InterPro" id="IPR018294">
    <property type="entry name" value="ISPD_synthase_CS"/>
</dbReference>
<dbReference type="InterPro" id="IPR029044">
    <property type="entry name" value="Nucleotide-diphossugar_trans"/>
</dbReference>
<dbReference type="NCBIfam" id="TIGR00453">
    <property type="entry name" value="ispD"/>
    <property type="match status" value="1"/>
</dbReference>
<dbReference type="PANTHER" id="PTHR32125">
    <property type="entry name" value="2-C-METHYL-D-ERYTHRITOL 4-PHOSPHATE CYTIDYLYLTRANSFERASE, CHLOROPLASTIC"/>
    <property type="match status" value="1"/>
</dbReference>
<dbReference type="PANTHER" id="PTHR32125:SF4">
    <property type="entry name" value="2-C-METHYL-D-ERYTHRITOL 4-PHOSPHATE CYTIDYLYLTRANSFERASE, CHLOROPLASTIC"/>
    <property type="match status" value="1"/>
</dbReference>
<dbReference type="Pfam" id="PF01128">
    <property type="entry name" value="IspD"/>
    <property type="match status" value="1"/>
</dbReference>
<dbReference type="SUPFAM" id="SSF53448">
    <property type="entry name" value="Nucleotide-diphospho-sugar transferases"/>
    <property type="match status" value="1"/>
</dbReference>
<dbReference type="PROSITE" id="PS01295">
    <property type="entry name" value="ISPD"/>
    <property type="match status" value="1"/>
</dbReference>
<comment type="function">
    <text evidence="1">Catalyzes the formation of 4-diphosphocytidyl-2-C-methyl-D-erythritol from CTP and 2-C-methyl-D-erythritol 4-phosphate (MEP).</text>
</comment>
<comment type="catalytic activity">
    <reaction evidence="1">
        <text>2-C-methyl-D-erythritol 4-phosphate + CTP + H(+) = 4-CDP-2-C-methyl-D-erythritol + diphosphate</text>
        <dbReference type="Rhea" id="RHEA:13429"/>
        <dbReference type="ChEBI" id="CHEBI:15378"/>
        <dbReference type="ChEBI" id="CHEBI:33019"/>
        <dbReference type="ChEBI" id="CHEBI:37563"/>
        <dbReference type="ChEBI" id="CHEBI:57823"/>
        <dbReference type="ChEBI" id="CHEBI:58262"/>
        <dbReference type="EC" id="2.7.7.60"/>
    </reaction>
</comment>
<comment type="pathway">
    <text evidence="1">Isoprenoid biosynthesis; isopentenyl diphosphate biosynthesis via DXP pathway; isopentenyl diphosphate from 1-deoxy-D-xylulose 5-phosphate: step 2/6.</text>
</comment>
<comment type="subunit">
    <text evidence="1">Homodimer.</text>
</comment>
<comment type="similarity">
    <text evidence="1">Belongs to the IspD/TarI cytidylyltransferase family. IspD subfamily.</text>
</comment>
<sequence length="236" mass="25720">MAATLLDVCAVVPAAGFGRRMQTECPKQYLSIGNKTILEHSVHALLAHPRVTRVVIAISPGDHRFAQLPLANHPQITVVDGGNERADSVLAGLQAVAEAQWVLVHDAARPCLHQDDLARLLAISENSRVGGILASPVRDTMKRGESGKNAIAHTVERADLWHALTPQFFPRELLHDCLTRALNEGATITDEASALEYCGFHPALVEGRADNIKVTRPEDLALAEFYLTRTIHQEKA</sequence>
<protein>
    <recommendedName>
        <fullName evidence="1">2-C-methyl-D-erythritol 4-phosphate cytidylyltransferase</fullName>
        <ecNumber evidence="1">2.7.7.60</ecNumber>
    </recommendedName>
    <alternativeName>
        <fullName evidence="1">4-diphosphocytidyl-2C-methyl-D-erythritol synthase</fullName>
    </alternativeName>
    <alternativeName>
        <fullName evidence="1">MEP cytidylyltransferase</fullName>
        <shortName evidence="1">MCT</shortName>
    </alternativeName>
</protein>
<gene>
    <name evidence="1" type="primary">ispD</name>
    <name type="ordered locus">SPAB_03644</name>
</gene>
<feature type="chain" id="PRO_1000075942" description="2-C-methyl-D-erythritol 4-phosphate cytidylyltransferase">
    <location>
        <begin position="1"/>
        <end position="236"/>
    </location>
</feature>
<feature type="site" description="Transition state stabilizer" evidence="1">
    <location>
        <position position="20"/>
    </location>
</feature>
<feature type="site" description="Transition state stabilizer" evidence="1">
    <location>
        <position position="27"/>
    </location>
</feature>
<feature type="site" description="Positions MEP for the nucleophilic attack" evidence="1">
    <location>
        <position position="157"/>
    </location>
</feature>
<feature type="site" description="Positions MEP for the nucleophilic attack" evidence="1">
    <location>
        <position position="213"/>
    </location>
</feature>
<reference key="1">
    <citation type="submission" date="2007-11" db="EMBL/GenBank/DDBJ databases">
        <authorList>
            <consortium name="The Salmonella enterica serovar Paratyphi B Genome Sequencing Project"/>
            <person name="McClelland M."/>
            <person name="Sanderson E.K."/>
            <person name="Porwollik S."/>
            <person name="Spieth J."/>
            <person name="Clifton W.S."/>
            <person name="Fulton R."/>
            <person name="Cordes M."/>
            <person name="Wollam A."/>
            <person name="Shah N."/>
            <person name="Pepin K."/>
            <person name="Bhonagiri V."/>
            <person name="Nash W."/>
            <person name="Johnson M."/>
            <person name="Thiruvilangam P."/>
            <person name="Wilson R."/>
        </authorList>
    </citation>
    <scope>NUCLEOTIDE SEQUENCE [LARGE SCALE GENOMIC DNA]</scope>
    <source>
        <strain>ATCC BAA-1250 / SPB7</strain>
    </source>
</reference>
<proteinExistence type="inferred from homology"/>
<organism>
    <name type="scientific">Salmonella paratyphi B (strain ATCC BAA-1250 / SPB7)</name>
    <dbReference type="NCBI Taxonomy" id="1016998"/>
    <lineage>
        <taxon>Bacteria</taxon>
        <taxon>Pseudomonadati</taxon>
        <taxon>Pseudomonadota</taxon>
        <taxon>Gammaproteobacteria</taxon>
        <taxon>Enterobacterales</taxon>
        <taxon>Enterobacteriaceae</taxon>
        <taxon>Salmonella</taxon>
    </lineage>
</organism>